<keyword id="KW-0256">Endoplasmic reticulum</keyword>
<keyword id="KW-0445">Lipid transport</keyword>
<keyword id="KW-0446">Lipid-binding</keyword>
<keyword id="KW-0472">Membrane</keyword>
<keyword id="KW-0812">Transmembrane</keyword>
<keyword id="KW-1133">Transmembrane helix</keyword>
<keyword id="KW-0813">Transport</keyword>
<accession>C4YI11</accession>
<comment type="function">
    <text evidence="1">Component of the ERMES/MDM complex, which serves as a molecular tether to connect the endoplasmic reticulum (ER) and mitochondria. Components of this complex are involved in the control of mitochondrial shape and protein biogenesis, and function in nonvesicular lipid trafficking between the ER and mitochondria. The MDM12-MMM1 subcomplex functions in the major beta-barrel assembly pathway that is responsible for biogenesis of all outer membrane beta-barrel proteins, and acts in a late step after the SAM complex. The MDM10-MDM12-MMM1 subcomplex further acts in the TOM40-specific pathway after the action of the MDM12-MMM1 complex. Essential for establishing and maintaining the structure of mitochondria and maintenance of mtDNA nucleoids.</text>
</comment>
<comment type="subunit">
    <text evidence="1">Homodimer. Component of the ER-mitochondria encounter structure (ERMES) or MDM complex, composed of MMM1, MDM10, MDM12 and MDM34. A MMM1 homodimer associates with one molecule of MDM12 on each side in a pairwise head-to-tail manner, and the SMP-LTD domains of MMM1 and MDM12 generate a continuous hydrophobic tunnel for phospholipid trafficking.</text>
</comment>
<comment type="subcellular location">
    <subcellularLocation>
        <location evidence="1">Endoplasmic reticulum membrane</location>
        <topology evidence="1">Single-pass type I membrane protein</topology>
    </subcellularLocation>
    <text evidence="1">The ERMES/MDM complex localizes to a few discrete foci (around 10 per single cell), that represent mitochondria-endoplasmic reticulum junctions. These foci are often found next to mtDNA nucleoids.</text>
</comment>
<comment type="domain">
    <text evidence="1">The SMP-LTD domain is a barrel-like domain that can bind various types of glycerophospholipids in its interior and mediate their transfer between two adjacent bilayers.</text>
</comment>
<comment type="similarity">
    <text evidence="1">Belongs to the MMM1 family.</text>
</comment>
<name>MMM1_CANAW</name>
<reference key="1">
    <citation type="journal article" date="2009" name="Nature">
        <title>Evolution of pathogenicity and sexual reproduction in eight Candida genomes.</title>
        <authorList>
            <person name="Butler G."/>
            <person name="Rasmussen M.D."/>
            <person name="Lin M.F."/>
            <person name="Santos M.A.S."/>
            <person name="Sakthikumar S."/>
            <person name="Munro C.A."/>
            <person name="Rheinbay E."/>
            <person name="Grabherr M."/>
            <person name="Forche A."/>
            <person name="Reedy J.L."/>
            <person name="Agrafioti I."/>
            <person name="Arnaud M.B."/>
            <person name="Bates S."/>
            <person name="Brown A.J.P."/>
            <person name="Brunke S."/>
            <person name="Costanzo M.C."/>
            <person name="Fitzpatrick D.A."/>
            <person name="de Groot P.W.J."/>
            <person name="Harris D."/>
            <person name="Hoyer L.L."/>
            <person name="Hube B."/>
            <person name="Klis F.M."/>
            <person name="Kodira C."/>
            <person name="Lennard N."/>
            <person name="Logue M.E."/>
            <person name="Martin R."/>
            <person name="Neiman A.M."/>
            <person name="Nikolaou E."/>
            <person name="Quail M.A."/>
            <person name="Quinn J."/>
            <person name="Santos M.C."/>
            <person name="Schmitzberger F.F."/>
            <person name="Sherlock G."/>
            <person name="Shah P."/>
            <person name="Silverstein K.A.T."/>
            <person name="Skrzypek M.S."/>
            <person name="Soll D."/>
            <person name="Staggs R."/>
            <person name="Stansfield I."/>
            <person name="Stumpf M.P.H."/>
            <person name="Sudbery P.E."/>
            <person name="Srikantha T."/>
            <person name="Zeng Q."/>
            <person name="Berman J."/>
            <person name="Berriman M."/>
            <person name="Heitman J."/>
            <person name="Gow N.A.R."/>
            <person name="Lorenz M.C."/>
            <person name="Birren B.W."/>
            <person name="Kellis M."/>
            <person name="Cuomo C.A."/>
        </authorList>
    </citation>
    <scope>NUCLEOTIDE SEQUENCE [LARGE SCALE GENOMIC DNA]</scope>
    <source>
        <strain>WO-1</strain>
    </source>
</reference>
<feature type="chain" id="PRO_0000384220" description="Maintenance of mitochondrial morphology protein 1">
    <location>
        <begin position="1"/>
        <end position="439"/>
    </location>
</feature>
<feature type="topological domain" description="Lumenal" evidence="1">
    <location>
        <begin position="1"/>
        <end position="76"/>
    </location>
</feature>
<feature type="transmembrane region" description="Helical" evidence="1">
    <location>
        <begin position="77"/>
        <end position="97"/>
    </location>
</feature>
<feature type="topological domain" description="Cytoplasmic" evidence="1">
    <location>
        <begin position="98"/>
        <end position="439"/>
    </location>
</feature>
<feature type="domain" description="SMP-LTD" evidence="1">
    <location>
        <begin position="165"/>
        <end position="395"/>
    </location>
</feature>
<feature type="region of interest" description="Disordered" evidence="2">
    <location>
        <begin position="125"/>
        <end position="145"/>
    </location>
</feature>
<feature type="region of interest" description="Disordered" evidence="2">
    <location>
        <begin position="309"/>
        <end position="336"/>
    </location>
</feature>
<feature type="region of interest" description="Disordered" evidence="2">
    <location>
        <begin position="405"/>
        <end position="425"/>
    </location>
</feature>
<feature type="compositionally biased region" description="Low complexity" evidence="2">
    <location>
        <begin position="315"/>
        <end position="326"/>
    </location>
</feature>
<feature type="compositionally biased region" description="Low complexity" evidence="2">
    <location>
        <begin position="410"/>
        <end position="424"/>
    </location>
</feature>
<evidence type="ECO:0000255" key="1">
    <source>
        <dbReference type="HAMAP-Rule" id="MF_03103"/>
    </source>
</evidence>
<evidence type="ECO:0000256" key="2">
    <source>
        <dbReference type="SAM" id="MobiDB-lite"/>
    </source>
</evidence>
<organism>
    <name type="scientific">Candida albicans (strain WO-1)</name>
    <name type="common">Yeast</name>
    <dbReference type="NCBI Taxonomy" id="294748"/>
    <lineage>
        <taxon>Eukaryota</taxon>
        <taxon>Fungi</taxon>
        <taxon>Dikarya</taxon>
        <taxon>Ascomycota</taxon>
        <taxon>Saccharomycotina</taxon>
        <taxon>Pichiomycetes</taxon>
        <taxon>Debaryomycetaceae</taxon>
        <taxon>Candida/Lodderomyces clade</taxon>
        <taxon>Candida</taxon>
    </lineage>
</organism>
<sequence length="439" mass="49026">MSQDLIETTATTTKIVEARELGHQIHDSLLEQLKLQQEELLQQQRDLFFQEQQLQLQQQVTQPVSNNGNTWSFTQGLVIGQVSVIFIIIVFVKFFVFADSSSHIPTKPGLDGAIGVIVKRNKNKKHSNGQFANDGENEDDTSLDSNQSKISSILEKTYYDVNNHASESLDWFNVLVAQTISQLRSEALLKDNIYHSLNNFLTNAKLPDFIDTINLTEIDIGDDFPIFSNCRIKYGEDLKRLEAKIDVDLSDTLTLGIATKLLLNQPRPLTAVLPVSLTVSIVRFSGCLTVSLINTKDIDLKNVDKTSNMNGYSKENANGDGASSSNNDEDEDDGGTALMFSFSPDYRLEFIVKSLIGSRAKLQDVPKISSLIENQLRTWFIERCVEPRFQVVRLPSLWPRTKNTREPVTKKTTTTPSTTVNGTSAATITTPGEYVNSNI</sequence>
<gene>
    <name evidence="1" type="primary">MMM1</name>
    <name type="ORF">CAWG_03718</name>
</gene>
<protein>
    <recommendedName>
        <fullName evidence="1">Maintenance of mitochondrial morphology protein 1</fullName>
    </recommendedName>
</protein>
<proteinExistence type="inferred from homology"/>
<dbReference type="EMBL" id="CH672349">
    <property type="protein sequence ID" value="EEQ45393.1"/>
    <property type="molecule type" value="Genomic_DNA"/>
</dbReference>
<dbReference type="SMR" id="C4YI11"/>
<dbReference type="PaxDb" id="5476-C4YI11"/>
<dbReference type="VEuPathDB" id="FungiDB:CAWG_03718"/>
<dbReference type="HOGENOM" id="CLU_032730_2_0_1"/>
<dbReference type="OMA" id="WSFTQGL"/>
<dbReference type="OrthoDB" id="12302at766764"/>
<dbReference type="Proteomes" id="UP000001429">
    <property type="component" value="Chromosome 4, Supercontig 1.4"/>
</dbReference>
<dbReference type="GO" id="GO:0005789">
    <property type="term" value="C:endoplasmic reticulum membrane"/>
    <property type="evidence" value="ECO:0007669"/>
    <property type="project" value="UniProtKB-SubCell"/>
</dbReference>
<dbReference type="GO" id="GO:0032865">
    <property type="term" value="C:ERMES complex"/>
    <property type="evidence" value="ECO:0007669"/>
    <property type="project" value="UniProtKB-UniRule"/>
</dbReference>
<dbReference type="GO" id="GO:0008289">
    <property type="term" value="F:lipid binding"/>
    <property type="evidence" value="ECO:0007669"/>
    <property type="project" value="UniProtKB-KW"/>
</dbReference>
<dbReference type="GO" id="GO:0000002">
    <property type="term" value="P:mitochondrial genome maintenance"/>
    <property type="evidence" value="ECO:0007669"/>
    <property type="project" value="UniProtKB-UniRule"/>
</dbReference>
<dbReference type="GO" id="GO:1990456">
    <property type="term" value="P:mitochondrion-endoplasmic reticulum membrane tethering"/>
    <property type="evidence" value="ECO:0007669"/>
    <property type="project" value="TreeGrafter"/>
</dbReference>
<dbReference type="GO" id="GO:0015914">
    <property type="term" value="P:phospholipid transport"/>
    <property type="evidence" value="ECO:0007669"/>
    <property type="project" value="TreeGrafter"/>
</dbReference>
<dbReference type="GO" id="GO:0045040">
    <property type="term" value="P:protein insertion into mitochondrial outer membrane"/>
    <property type="evidence" value="ECO:0007669"/>
    <property type="project" value="UniProtKB-UniRule"/>
</dbReference>
<dbReference type="CDD" id="cd21671">
    <property type="entry name" value="SMP_Mmm1"/>
    <property type="match status" value="1"/>
</dbReference>
<dbReference type="HAMAP" id="MF_03103">
    <property type="entry name" value="Mmm1"/>
    <property type="match status" value="1"/>
</dbReference>
<dbReference type="InterPro" id="IPR027537">
    <property type="entry name" value="Mmm1"/>
</dbReference>
<dbReference type="InterPro" id="IPR019411">
    <property type="entry name" value="MMM1_dom"/>
</dbReference>
<dbReference type="InterPro" id="IPR031468">
    <property type="entry name" value="SMP_LBD"/>
</dbReference>
<dbReference type="PANTHER" id="PTHR13466:SF0">
    <property type="entry name" value="SMP-LTD DOMAIN-CONTAINING PROTEIN"/>
    <property type="match status" value="1"/>
</dbReference>
<dbReference type="PANTHER" id="PTHR13466">
    <property type="entry name" value="TEX2 PROTEIN-RELATED"/>
    <property type="match status" value="1"/>
</dbReference>
<dbReference type="Pfam" id="PF10296">
    <property type="entry name" value="MMM1"/>
    <property type="match status" value="1"/>
</dbReference>
<dbReference type="PROSITE" id="PS51847">
    <property type="entry name" value="SMP"/>
    <property type="match status" value="1"/>
</dbReference>